<organism>
    <name type="scientific">Shewanella sp. (strain W3-18-1)</name>
    <dbReference type="NCBI Taxonomy" id="351745"/>
    <lineage>
        <taxon>Bacteria</taxon>
        <taxon>Pseudomonadati</taxon>
        <taxon>Pseudomonadota</taxon>
        <taxon>Gammaproteobacteria</taxon>
        <taxon>Alteromonadales</taxon>
        <taxon>Shewanellaceae</taxon>
        <taxon>Shewanella</taxon>
    </lineage>
</organism>
<reference key="1">
    <citation type="submission" date="2006-12" db="EMBL/GenBank/DDBJ databases">
        <title>Complete sequence of Shewanella sp. W3-18-1.</title>
        <authorList>
            <consortium name="US DOE Joint Genome Institute"/>
            <person name="Copeland A."/>
            <person name="Lucas S."/>
            <person name="Lapidus A."/>
            <person name="Barry K."/>
            <person name="Detter J.C."/>
            <person name="Glavina del Rio T."/>
            <person name="Hammon N."/>
            <person name="Israni S."/>
            <person name="Dalin E."/>
            <person name="Tice H."/>
            <person name="Pitluck S."/>
            <person name="Chain P."/>
            <person name="Malfatti S."/>
            <person name="Shin M."/>
            <person name="Vergez L."/>
            <person name="Schmutz J."/>
            <person name="Larimer F."/>
            <person name="Land M."/>
            <person name="Hauser L."/>
            <person name="Kyrpides N."/>
            <person name="Lykidis A."/>
            <person name="Tiedje J."/>
            <person name="Richardson P."/>
        </authorList>
    </citation>
    <scope>NUCLEOTIDE SEQUENCE [LARGE SCALE GENOMIC DNA]</scope>
    <source>
        <strain>W3-18-1</strain>
    </source>
</reference>
<gene>
    <name evidence="2" type="primary">rpsL</name>
    <name type="ordered locus">Sputw3181_0151</name>
</gene>
<accession>A1REA9</accession>
<sequence length="124" mass="13606">MATVNQLVRKPRAPKVDKTNVPALNACPQKRGVCTRVYTTTPKKPNSALRKVARVRLTNGFEVTSYIGGEGHNLQEHSVILIRGGRVKDLPGVRYHTVRGALDCAGVSSRRQGRSKYGAKRPKS</sequence>
<feature type="chain" id="PRO_0000296030" description="Small ribosomal subunit protein uS12">
    <location>
        <begin position="1"/>
        <end position="124"/>
    </location>
</feature>
<feature type="modified residue" description="3-methylthioaspartic acid" evidence="1">
    <location>
        <position position="89"/>
    </location>
</feature>
<comment type="function">
    <text evidence="2">With S4 and S5 plays an important role in translational accuracy.</text>
</comment>
<comment type="function">
    <text evidence="2">Interacts with and stabilizes bases of the 16S rRNA that are involved in tRNA selection in the A site and with the mRNA backbone. Located at the interface of the 30S and 50S subunits, it traverses the body of the 30S subunit contacting proteins on the other side and probably holding the rRNA structure together. The combined cluster of proteins S8, S12 and S17 appears to hold together the shoulder and platform of the 30S subunit.</text>
</comment>
<comment type="subunit">
    <text evidence="2">Part of the 30S ribosomal subunit. Contacts proteins S8 and S17. May interact with IF1 in the 30S initiation complex.</text>
</comment>
<comment type="similarity">
    <text evidence="2">Belongs to the universal ribosomal protein uS12 family.</text>
</comment>
<name>RS12_SHESW</name>
<evidence type="ECO:0000250" key="1"/>
<evidence type="ECO:0000255" key="2">
    <source>
        <dbReference type="HAMAP-Rule" id="MF_00403"/>
    </source>
</evidence>
<evidence type="ECO:0000305" key="3"/>
<protein>
    <recommendedName>
        <fullName evidence="2">Small ribosomal subunit protein uS12</fullName>
    </recommendedName>
    <alternativeName>
        <fullName evidence="3">30S ribosomal protein S12</fullName>
    </alternativeName>
</protein>
<proteinExistence type="inferred from homology"/>
<keyword id="KW-0488">Methylation</keyword>
<keyword id="KW-0687">Ribonucleoprotein</keyword>
<keyword id="KW-0689">Ribosomal protein</keyword>
<keyword id="KW-0694">RNA-binding</keyword>
<keyword id="KW-0699">rRNA-binding</keyword>
<keyword id="KW-0820">tRNA-binding</keyword>
<dbReference type="EMBL" id="CP000503">
    <property type="protein sequence ID" value="ABM23004.1"/>
    <property type="molecule type" value="Genomic_DNA"/>
</dbReference>
<dbReference type="RefSeq" id="WP_011787569.1">
    <property type="nucleotide sequence ID" value="NC_008750.1"/>
</dbReference>
<dbReference type="SMR" id="A1REA9"/>
<dbReference type="GeneID" id="67441755"/>
<dbReference type="KEGG" id="shw:Sputw3181_0151"/>
<dbReference type="HOGENOM" id="CLU_104295_1_2_6"/>
<dbReference type="Proteomes" id="UP000002597">
    <property type="component" value="Chromosome"/>
</dbReference>
<dbReference type="GO" id="GO:0015935">
    <property type="term" value="C:small ribosomal subunit"/>
    <property type="evidence" value="ECO:0007669"/>
    <property type="project" value="InterPro"/>
</dbReference>
<dbReference type="GO" id="GO:0019843">
    <property type="term" value="F:rRNA binding"/>
    <property type="evidence" value="ECO:0007669"/>
    <property type="project" value="UniProtKB-UniRule"/>
</dbReference>
<dbReference type="GO" id="GO:0003735">
    <property type="term" value="F:structural constituent of ribosome"/>
    <property type="evidence" value="ECO:0007669"/>
    <property type="project" value="InterPro"/>
</dbReference>
<dbReference type="GO" id="GO:0000049">
    <property type="term" value="F:tRNA binding"/>
    <property type="evidence" value="ECO:0007669"/>
    <property type="project" value="UniProtKB-UniRule"/>
</dbReference>
<dbReference type="GO" id="GO:0006412">
    <property type="term" value="P:translation"/>
    <property type="evidence" value="ECO:0007669"/>
    <property type="project" value="UniProtKB-UniRule"/>
</dbReference>
<dbReference type="CDD" id="cd03368">
    <property type="entry name" value="Ribosomal_S12"/>
    <property type="match status" value="1"/>
</dbReference>
<dbReference type="FunFam" id="2.40.50.140:FF:000001">
    <property type="entry name" value="30S ribosomal protein S12"/>
    <property type="match status" value="1"/>
</dbReference>
<dbReference type="Gene3D" id="2.40.50.140">
    <property type="entry name" value="Nucleic acid-binding proteins"/>
    <property type="match status" value="1"/>
</dbReference>
<dbReference type="HAMAP" id="MF_00403_B">
    <property type="entry name" value="Ribosomal_uS12_B"/>
    <property type="match status" value="1"/>
</dbReference>
<dbReference type="InterPro" id="IPR012340">
    <property type="entry name" value="NA-bd_OB-fold"/>
</dbReference>
<dbReference type="InterPro" id="IPR006032">
    <property type="entry name" value="Ribosomal_uS12"/>
</dbReference>
<dbReference type="InterPro" id="IPR005679">
    <property type="entry name" value="Ribosomal_uS12_bac"/>
</dbReference>
<dbReference type="NCBIfam" id="TIGR00981">
    <property type="entry name" value="rpsL_bact"/>
    <property type="match status" value="1"/>
</dbReference>
<dbReference type="PANTHER" id="PTHR11652">
    <property type="entry name" value="30S RIBOSOMAL PROTEIN S12 FAMILY MEMBER"/>
    <property type="match status" value="1"/>
</dbReference>
<dbReference type="Pfam" id="PF00164">
    <property type="entry name" value="Ribosom_S12_S23"/>
    <property type="match status" value="1"/>
</dbReference>
<dbReference type="PIRSF" id="PIRSF002133">
    <property type="entry name" value="Ribosomal_S12/S23"/>
    <property type="match status" value="1"/>
</dbReference>
<dbReference type="PRINTS" id="PR01034">
    <property type="entry name" value="RIBOSOMALS12"/>
</dbReference>
<dbReference type="SUPFAM" id="SSF50249">
    <property type="entry name" value="Nucleic acid-binding proteins"/>
    <property type="match status" value="1"/>
</dbReference>
<dbReference type="PROSITE" id="PS00055">
    <property type="entry name" value="RIBOSOMAL_S12"/>
    <property type="match status" value="1"/>
</dbReference>